<dbReference type="EMBL" id="M19019">
    <property type="protein sequence ID" value="AAA26294.1"/>
    <property type="molecule type" value="Genomic_DNA"/>
</dbReference>
<dbReference type="PIR" id="A43663">
    <property type="entry name" value="A43663"/>
</dbReference>
<feature type="chain" id="PRO_0000083970" description="Host-inducible protein A">
    <location>
        <begin position="1"/>
        <end position="295"/>
    </location>
</feature>
<feature type="region of interest" description="Disordered" evidence="1">
    <location>
        <begin position="1"/>
        <end position="20"/>
    </location>
</feature>
<protein>
    <recommendedName>
        <fullName>Host-inducible protein A</fullName>
    </recommendedName>
</protein>
<comment type="induction">
    <text>In bacterial-plant-symbiosis, this protein is encoded by a bacterial gene which is inducible by plant 4',7-dihydroxy-isoflavone or derivatives.</text>
</comment>
<comment type="similarity">
    <text evidence="2">Belongs to the NopP family.</text>
</comment>
<reference key="1">
    <citation type="journal article" date="1988" name="J. Bacteriol.">
        <title>Two host-inducible genes of Rhizobium fredii and characterization of the inducing compound.</title>
        <authorList>
            <person name="Sadowsky M.J."/>
            <person name="Olson E.R."/>
            <person name="Foster V.E."/>
            <person name="Kosslak R.M."/>
            <person name="Verma D.P.S."/>
        </authorList>
    </citation>
    <scope>NUCLEOTIDE SEQUENCE [GENOMIC DNA]</scope>
    <source>
        <strain>USDA 201</strain>
    </source>
</reference>
<sequence>MHLDRSDSNGGSSRYTLDHEPPVVPIDLKTFRREIRKFHGKEITDIADNPQEYSDFVSAKARRTADVAQQYGIRRDSENARYFSYQLGNQCVGLMRTEGGFSMEEEFESKSWRDQFPGHQEITSTVDLQVAHPLVENAGDILLEAPTSEGRRTTVAELARGKPRGESRAAMMGFVEVDDCDMVLDPKQHPDKWTQTSAAEWRRKDKPPLYLRKFEDAETAQCSTKAALTRLTKMTSCDRILARFGRDGRAPSAKTGPHVMDRERKSVTNCHALTAIPIRCLGAKELERRVSLRPS</sequence>
<geneLocation type="plasmid">
    <name>sym</name>
</geneLocation>
<accession>P12779</accession>
<name>HIA_RHIFR</name>
<evidence type="ECO:0000256" key="1">
    <source>
        <dbReference type="SAM" id="MobiDB-lite"/>
    </source>
</evidence>
<evidence type="ECO:0000305" key="2"/>
<keyword id="KW-0536">Nodulation</keyword>
<keyword id="KW-0614">Plasmid</keyword>
<organism>
    <name type="scientific">Rhizobium fredii</name>
    <name type="common">Sinorhizobium fredii</name>
    <dbReference type="NCBI Taxonomy" id="380"/>
    <lineage>
        <taxon>Bacteria</taxon>
        <taxon>Pseudomonadati</taxon>
        <taxon>Pseudomonadota</taxon>
        <taxon>Alphaproteobacteria</taxon>
        <taxon>Hyphomicrobiales</taxon>
        <taxon>Rhizobiaceae</taxon>
        <taxon>Sinorhizobium/Ensifer group</taxon>
        <taxon>Sinorhizobium</taxon>
    </lineage>
</organism>
<proteinExistence type="evidence at transcript level"/>